<accession>Q75E60</accession>
<feature type="chain" id="PRO_0000255602" description="RNA polymerase II subunit A C-terminal domain phosphatase SSU72">
    <location>
        <begin position="1"/>
        <end position="281"/>
    </location>
</feature>
<sequence>MAPKRGSSPAIAGHCSLILSRGLPSVRVTDSNRQKKLIRHLHTFLLYLPADTSCGYRPECGAASFRTRQSSLMVSSEMPNTSTLRLCTVCASNNNRSMESHRVLKEAGYDVSSYGTGSAVRLPGLSIDKPNVYPFGTPYNDIYNDLLAQSAERYKSNGLLEMLDRNRRIKKAPEKWHDSQKVFDFVFTCEERCFDSVCEDLMNRGGQLNKIVHVINLDIRDDNENAKIGGRAMLELVKALNSKMQECDQQGVPFEDTIMDVVADWQQAHPQLPLLYSPAYY</sequence>
<proteinExistence type="inferred from homology"/>
<protein>
    <recommendedName>
        <fullName>RNA polymerase II subunit A C-terminal domain phosphatase SSU72</fullName>
        <shortName>CTD phosphatase SSU72</shortName>
        <ecNumber>3.1.3.16</ecNumber>
    </recommendedName>
    <alternativeName>
        <fullName>Suppressor of SUA7 protein 2 homolog</fullName>
    </alternativeName>
</protein>
<evidence type="ECO:0000250" key="1"/>
<evidence type="ECO:0000305" key="2"/>
<gene>
    <name type="primary">SSU72</name>
    <name type="ordered locus">ABL190W</name>
</gene>
<name>SSU72_EREGS</name>
<comment type="function">
    <text evidence="1">Processively dephosphorylates Ser-5 of the heptad repeats YSPTSPS in the C-terminal domain of the largest RNA polymerase II subunit (RPB1).</text>
</comment>
<comment type="function">
    <text evidence="1">Component of the cleavage and polyadenylation factor (CPF) complex, which plays a key role in polyadenylation-dependent pre-mRNA 3'-end formation and cooperates with cleavage factors including the CFIA complex and NAB4/CFIB. SSU72 is required for 3'-end formation of snoRNAs (By similarity).</text>
</comment>
<comment type="catalytic activity">
    <reaction>
        <text>O-phospho-L-seryl-[protein] + H2O = L-seryl-[protein] + phosphate</text>
        <dbReference type="Rhea" id="RHEA:20629"/>
        <dbReference type="Rhea" id="RHEA-COMP:9863"/>
        <dbReference type="Rhea" id="RHEA-COMP:11604"/>
        <dbReference type="ChEBI" id="CHEBI:15377"/>
        <dbReference type="ChEBI" id="CHEBI:29999"/>
        <dbReference type="ChEBI" id="CHEBI:43474"/>
        <dbReference type="ChEBI" id="CHEBI:83421"/>
        <dbReference type="EC" id="3.1.3.16"/>
    </reaction>
</comment>
<comment type="catalytic activity">
    <reaction>
        <text>O-phospho-L-threonyl-[protein] + H2O = L-threonyl-[protein] + phosphate</text>
        <dbReference type="Rhea" id="RHEA:47004"/>
        <dbReference type="Rhea" id="RHEA-COMP:11060"/>
        <dbReference type="Rhea" id="RHEA-COMP:11605"/>
        <dbReference type="ChEBI" id="CHEBI:15377"/>
        <dbReference type="ChEBI" id="CHEBI:30013"/>
        <dbReference type="ChEBI" id="CHEBI:43474"/>
        <dbReference type="ChEBI" id="CHEBI:61977"/>
        <dbReference type="EC" id="3.1.3.16"/>
    </reaction>
</comment>
<comment type="subunit">
    <text evidence="1">Component of the cleavage and polyadenylation factor (CPF) complex.</text>
</comment>
<comment type="subcellular location">
    <subcellularLocation>
        <location evidence="1">Nucleus</location>
    </subcellularLocation>
</comment>
<comment type="similarity">
    <text evidence="2">Belongs to the SSU72 phosphatase family.</text>
</comment>
<keyword id="KW-0378">Hydrolase</keyword>
<keyword id="KW-0507">mRNA processing</keyword>
<keyword id="KW-0539">Nucleus</keyword>
<keyword id="KW-0904">Protein phosphatase</keyword>
<keyword id="KW-1185">Reference proteome</keyword>
<dbReference type="EC" id="3.1.3.16"/>
<dbReference type="EMBL" id="AE016815">
    <property type="protein sequence ID" value="AAS50581.1"/>
    <property type="molecule type" value="Genomic_DNA"/>
</dbReference>
<dbReference type="RefSeq" id="NP_982757.1">
    <property type="nucleotide sequence ID" value="NM_208110.1"/>
</dbReference>
<dbReference type="SMR" id="Q75E60"/>
<dbReference type="FunCoup" id="Q75E60">
    <property type="interactions" value="1007"/>
</dbReference>
<dbReference type="STRING" id="284811.Q75E60"/>
<dbReference type="EnsemblFungi" id="AAS50581">
    <property type="protein sequence ID" value="AAS50581"/>
    <property type="gene ID" value="AGOS_ABL190W"/>
</dbReference>
<dbReference type="GeneID" id="4618836"/>
<dbReference type="KEGG" id="ago:AGOS_ABL190W"/>
<dbReference type="eggNOG" id="KOG2424">
    <property type="taxonomic scope" value="Eukaryota"/>
</dbReference>
<dbReference type="HOGENOM" id="CLU_062463_0_1_1"/>
<dbReference type="InParanoid" id="Q75E60"/>
<dbReference type="OMA" id="TQPNVYQ"/>
<dbReference type="OrthoDB" id="57957at2759"/>
<dbReference type="Proteomes" id="UP000000591">
    <property type="component" value="Chromosome II"/>
</dbReference>
<dbReference type="GO" id="GO:0000785">
    <property type="term" value="C:chromatin"/>
    <property type="evidence" value="ECO:0007669"/>
    <property type="project" value="EnsemblFungi"/>
</dbReference>
<dbReference type="GO" id="GO:0005847">
    <property type="term" value="C:mRNA cleavage and polyadenylation specificity factor complex"/>
    <property type="evidence" value="ECO:0000318"/>
    <property type="project" value="GO_Central"/>
</dbReference>
<dbReference type="GO" id="GO:0004725">
    <property type="term" value="F:protein tyrosine phosphatase activity"/>
    <property type="evidence" value="ECO:0007669"/>
    <property type="project" value="EnsemblFungi"/>
</dbReference>
<dbReference type="GO" id="GO:0008420">
    <property type="term" value="F:RNA polymerase II CTD heptapeptide repeat phosphatase activity"/>
    <property type="evidence" value="ECO:0000318"/>
    <property type="project" value="GO_Central"/>
</dbReference>
<dbReference type="GO" id="GO:0180007">
    <property type="term" value="F:RNA polymerase II CTD heptapeptide repeat S5 phosphatase activity"/>
    <property type="evidence" value="ECO:0007669"/>
    <property type="project" value="EnsemblFungi"/>
</dbReference>
<dbReference type="GO" id="GO:0030643">
    <property type="term" value="P:intracellular phosphate ion homeostasis"/>
    <property type="evidence" value="ECO:0007669"/>
    <property type="project" value="EnsemblFungi"/>
</dbReference>
<dbReference type="GO" id="GO:0031124">
    <property type="term" value="P:mRNA 3'-end processing"/>
    <property type="evidence" value="ECO:0007669"/>
    <property type="project" value="EnsemblFungi"/>
</dbReference>
<dbReference type="GO" id="GO:0032215">
    <property type="term" value="P:positive regulation of telomere maintenance via semi-conservative replication"/>
    <property type="evidence" value="ECO:0007669"/>
    <property type="project" value="EnsemblFungi"/>
</dbReference>
<dbReference type="GO" id="GO:0090052">
    <property type="term" value="P:regulation of pericentric heterochromatin formation"/>
    <property type="evidence" value="ECO:0007669"/>
    <property type="project" value="EnsemblFungi"/>
</dbReference>
<dbReference type="GO" id="GO:1902801">
    <property type="term" value="P:regulation of siRNA-independent facultative heterochromatin formation"/>
    <property type="evidence" value="ECO:0007669"/>
    <property type="project" value="EnsemblFungi"/>
</dbReference>
<dbReference type="GO" id="GO:0009302">
    <property type="term" value="P:sno(s)RNA transcription"/>
    <property type="evidence" value="ECO:0007669"/>
    <property type="project" value="EnsemblFungi"/>
</dbReference>
<dbReference type="GO" id="GO:0006369">
    <property type="term" value="P:termination of RNA polymerase II transcription"/>
    <property type="evidence" value="ECO:0000318"/>
    <property type="project" value="GO_Central"/>
</dbReference>
<dbReference type="GO" id="GO:0030847">
    <property type="term" value="P:termination of RNA polymerase II transcription, exosome-dependent"/>
    <property type="evidence" value="ECO:0007669"/>
    <property type="project" value="EnsemblFungi"/>
</dbReference>
<dbReference type="GO" id="GO:0030846">
    <property type="term" value="P:termination of RNA polymerase II transcription, poly(A)-coupled"/>
    <property type="evidence" value="ECO:0007669"/>
    <property type="project" value="EnsemblFungi"/>
</dbReference>
<dbReference type="GO" id="GO:0031564">
    <property type="term" value="P:transcription antitermination"/>
    <property type="evidence" value="ECO:0007669"/>
    <property type="project" value="EnsemblFungi"/>
</dbReference>
<dbReference type="GO" id="GO:0006368">
    <property type="term" value="P:transcription elongation by RNA polymerase II"/>
    <property type="evidence" value="ECO:0007669"/>
    <property type="project" value="EnsemblFungi"/>
</dbReference>
<dbReference type="GO" id="GO:0001174">
    <property type="term" value="P:transcriptional start site selection at RNA polymerase II promoter"/>
    <property type="evidence" value="ECO:0007669"/>
    <property type="project" value="EnsemblFungi"/>
</dbReference>
<dbReference type="FunFam" id="3.40.50.2300:FF:000039">
    <property type="entry name" value="RNA polymerase II subunit A C-terminal domain phosphatase"/>
    <property type="match status" value="1"/>
</dbReference>
<dbReference type="FunFam" id="3.40.50.2300:FF:000189">
    <property type="entry name" value="SSU72p Phosphatase and transcription/RNA-processing factor"/>
    <property type="match status" value="1"/>
</dbReference>
<dbReference type="Gene3D" id="3.40.50.2300">
    <property type="match status" value="2"/>
</dbReference>
<dbReference type="InterPro" id="IPR006811">
    <property type="entry name" value="RNA_pol_II_suA"/>
</dbReference>
<dbReference type="PANTHER" id="PTHR20383">
    <property type="entry name" value="RNA POLYMERASE II SUBUNIT A C-TERMINAL DOMAIN PHOSPHATASE"/>
    <property type="match status" value="1"/>
</dbReference>
<dbReference type="Pfam" id="PF04722">
    <property type="entry name" value="Ssu72"/>
    <property type="match status" value="1"/>
</dbReference>
<reference key="1">
    <citation type="journal article" date="2004" name="Science">
        <title>The Ashbya gossypii genome as a tool for mapping the ancient Saccharomyces cerevisiae genome.</title>
        <authorList>
            <person name="Dietrich F.S."/>
            <person name="Voegeli S."/>
            <person name="Brachat S."/>
            <person name="Lerch A."/>
            <person name="Gates K."/>
            <person name="Steiner S."/>
            <person name="Mohr C."/>
            <person name="Poehlmann R."/>
            <person name="Luedi P."/>
            <person name="Choi S."/>
            <person name="Wing R.A."/>
            <person name="Flavier A."/>
            <person name="Gaffney T.D."/>
            <person name="Philippsen P."/>
        </authorList>
    </citation>
    <scope>NUCLEOTIDE SEQUENCE [LARGE SCALE GENOMIC DNA]</scope>
    <source>
        <strain>ATCC 10895 / CBS 109.51 / FGSC 9923 / NRRL Y-1056</strain>
    </source>
</reference>
<reference key="2">
    <citation type="journal article" date="2013" name="G3 (Bethesda)">
        <title>Genomes of Ashbya fungi isolated from insects reveal four mating-type loci, numerous translocations, lack of transposons, and distinct gene duplications.</title>
        <authorList>
            <person name="Dietrich F.S."/>
            <person name="Voegeli S."/>
            <person name="Kuo S."/>
            <person name="Philippsen P."/>
        </authorList>
    </citation>
    <scope>GENOME REANNOTATION</scope>
    <source>
        <strain>ATCC 10895 / CBS 109.51 / FGSC 9923 / NRRL Y-1056</strain>
    </source>
</reference>
<organism>
    <name type="scientific">Eremothecium gossypii (strain ATCC 10895 / CBS 109.51 / FGSC 9923 / NRRL Y-1056)</name>
    <name type="common">Yeast</name>
    <name type="synonym">Ashbya gossypii</name>
    <dbReference type="NCBI Taxonomy" id="284811"/>
    <lineage>
        <taxon>Eukaryota</taxon>
        <taxon>Fungi</taxon>
        <taxon>Dikarya</taxon>
        <taxon>Ascomycota</taxon>
        <taxon>Saccharomycotina</taxon>
        <taxon>Saccharomycetes</taxon>
        <taxon>Saccharomycetales</taxon>
        <taxon>Saccharomycetaceae</taxon>
        <taxon>Eremothecium</taxon>
    </lineage>
</organism>